<comment type="function">
    <text evidence="5 6">Cell wall protein that participates directly in adhesive cell-cell interactions during yeast flocculation, a reversible, asexual and Ca(2+)-dependent process in which cells adhere to form aggregates (flocs) consisting of thousands of cells. The lectin-like protein sticks out of the cell wall of flocculent cells and selectively binds mannose residues in the cell walls of adjacent cells. Activity is inhibited by mannose, glucose, maltose and sucrose. Also involved in cell-substrate adhesion, haploid invasive growth and diploid pseudohyphae formation.</text>
</comment>
<comment type="subcellular location">
    <subcellularLocation>
        <location evidence="1">Secreted</location>
        <location evidence="1">Cell wall</location>
    </subcellularLocation>
    <subcellularLocation>
        <location evidence="8">Membrane</location>
        <topology evidence="8">Lipid-anchor</topology>
        <topology evidence="8">GPI-anchor</topology>
    </subcellularLocation>
</comment>
<comment type="domain">
    <text evidence="1">The number of the intragenic tandem repeats varies between different S.cerevisiae strains. There is a linear correlation between protein size and the extend of adhesion: the more repeats, the stronger the adhesion properties and the greater the fraction of flocculating cells (By similarity).</text>
</comment>
<comment type="PTM">
    <text evidence="1">Extensively O-glycosylated.</text>
</comment>
<comment type="PTM">
    <text evidence="1">The GPI-anchor is attached to the protein in the endoplasmic reticulum and serves to target the protein to the cell surface. There, the glucosamine-inositol phospholipid moiety is cleaved off and the GPI-modified mannoprotein is covalently attached via its lipidless GPI glycan remnant to the 1,6-beta-glucan of the outer cell wall layer (By similarity).</text>
</comment>
<comment type="similarity">
    <text evidence="8">Belongs to the flocculin family.</text>
</comment>
<reference key="1">
    <citation type="journal article" date="1994" name="Nature">
        <title>Complete DNA sequence of yeast chromosome XI.</title>
        <authorList>
            <person name="Dujon B."/>
            <person name="Alexandraki D."/>
            <person name="Andre B."/>
            <person name="Ansorge W."/>
            <person name="Baladron V."/>
            <person name="Ballesta J.P.G."/>
            <person name="Banrevi A."/>
            <person name="Bolle P.-A."/>
            <person name="Bolotin-Fukuhara M."/>
            <person name="Bossier P."/>
            <person name="Bou G."/>
            <person name="Boyer J."/>
            <person name="Buitrago M.J."/>
            <person name="Cheret G."/>
            <person name="Colleaux L."/>
            <person name="Daignan-Fornier B."/>
            <person name="del Rey F."/>
            <person name="Dion C."/>
            <person name="Domdey H."/>
            <person name="Duesterhoeft A."/>
            <person name="Duesterhus S."/>
            <person name="Entian K.-D."/>
            <person name="Erfle H."/>
            <person name="Esteban P.F."/>
            <person name="Feldmann H."/>
            <person name="Fernandes L."/>
            <person name="Fobo G.M."/>
            <person name="Fritz C."/>
            <person name="Fukuhara H."/>
            <person name="Gabel C."/>
            <person name="Gaillon L."/>
            <person name="Garcia-Cantalejo J.M."/>
            <person name="Garcia-Ramirez J.J."/>
            <person name="Gent M.E."/>
            <person name="Ghazvini M."/>
            <person name="Goffeau A."/>
            <person name="Gonzalez A."/>
            <person name="Grothues D."/>
            <person name="Guerreiro P."/>
            <person name="Hegemann J.H."/>
            <person name="Hewitt N."/>
            <person name="Hilger F."/>
            <person name="Hollenberg C.P."/>
            <person name="Horaitis O."/>
            <person name="Indge K.J."/>
            <person name="Jacquier A."/>
            <person name="James C.M."/>
            <person name="Jauniaux J.-C."/>
            <person name="Jimenez A."/>
            <person name="Keuchel H."/>
            <person name="Kirchrath L."/>
            <person name="Kleine K."/>
            <person name="Koetter P."/>
            <person name="Legrain P."/>
            <person name="Liebl S."/>
            <person name="Louis E.J."/>
            <person name="Maia e Silva A."/>
            <person name="Marck C."/>
            <person name="Monnier A.-L."/>
            <person name="Moestl D."/>
            <person name="Mueller S."/>
            <person name="Obermaier B."/>
            <person name="Oliver S.G."/>
            <person name="Pallier C."/>
            <person name="Pascolo S."/>
            <person name="Pfeiffer F."/>
            <person name="Philippsen P."/>
            <person name="Planta R.J."/>
            <person name="Pohl F.M."/>
            <person name="Pohl T.M."/>
            <person name="Poehlmann R."/>
            <person name="Portetelle D."/>
            <person name="Purnelle B."/>
            <person name="Puzos V."/>
            <person name="Ramezani Rad M."/>
            <person name="Rasmussen S.W."/>
            <person name="Remacha M.A."/>
            <person name="Revuelta J.L."/>
            <person name="Richard G.-F."/>
            <person name="Rieger M."/>
            <person name="Rodrigues-Pousada C."/>
            <person name="Rose M."/>
            <person name="Rupp T."/>
            <person name="Santos M.A."/>
            <person name="Schwager C."/>
            <person name="Sensen C."/>
            <person name="Skala J."/>
            <person name="Soares H."/>
            <person name="Sor F."/>
            <person name="Stegemann J."/>
            <person name="Tettelin H."/>
            <person name="Thierry A."/>
            <person name="Tzermia M."/>
            <person name="Urrestarazu L.A."/>
            <person name="van Dyck L."/>
            <person name="van Vliet-Reedijk J.C."/>
            <person name="Valens M."/>
            <person name="Vandenbol M."/>
            <person name="Vilela C."/>
            <person name="Vissers S."/>
            <person name="von Wettstein D."/>
            <person name="Voss H."/>
            <person name="Wiemann S."/>
            <person name="Xu G."/>
            <person name="Zimmermann J."/>
            <person name="Haasemann M."/>
            <person name="Becker I."/>
            <person name="Mewes H.-W."/>
        </authorList>
    </citation>
    <scope>NUCLEOTIDE SEQUENCE [LARGE SCALE GENOMIC DNA]</scope>
    <source>
        <strain>ATCC 204508 / S288c</strain>
    </source>
</reference>
<reference key="2">
    <citation type="journal article" date="2014" name="G3 (Bethesda)">
        <title>The reference genome sequence of Saccharomyces cerevisiae: Then and now.</title>
        <authorList>
            <person name="Engel S.R."/>
            <person name="Dietrich F.S."/>
            <person name="Fisk D.G."/>
            <person name="Binkley G."/>
            <person name="Balakrishnan R."/>
            <person name="Costanzo M.C."/>
            <person name="Dwight S.S."/>
            <person name="Hitz B.C."/>
            <person name="Karra K."/>
            <person name="Nash R.S."/>
            <person name="Weng S."/>
            <person name="Wong E.D."/>
            <person name="Lloyd P."/>
            <person name="Skrzypek M.S."/>
            <person name="Miyasato S.R."/>
            <person name="Simison M."/>
            <person name="Cherry J.M."/>
        </authorList>
    </citation>
    <scope>GENOME REANNOTATION</scope>
    <source>
        <strain>ATCC 204508 / S288c</strain>
    </source>
</reference>
<reference key="3">
    <citation type="journal article" date="1995" name="Yeast">
        <title>Review: the dominant flocculation genes of Saccharomyces cerevisiae constitute a new subtelomeric gene family.</title>
        <authorList>
            <person name="Teunissen A.W.R.H."/>
            <person name="Steensma H.Y."/>
        </authorList>
    </citation>
    <scope>REVIEW</scope>
</reference>
<reference key="4">
    <citation type="journal article" date="2000" name="Proc. Natl. Acad. Sci. U.S.A.">
        <title>A Saccharomyces gene family involved in invasive growth, cell-cell adhesion, and mating.</title>
        <authorList>
            <person name="Guo B."/>
            <person name="Styles C.A."/>
            <person name="Feng Q."/>
            <person name="Fink G.R."/>
        </authorList>
    </citation>
    <scope>FUNCTION</scope>
</reference>
<reference key="5">
    <citation type="journal article" date="2004" name="Cell">
        <title>Genetic and epigenetic regulation of the FLO gene family generates cell-surface variation in yeast.</title>
        <authorList>
            <person name="Halme A."/>
            <person name="Bumgarner S."/>
            <person name="Styles C.A."/>
            <person name="Fink G.R."/>
        </authorList>
    </citation>
    <scope>FUNCTION</scope>
</reference>
<reference key="6">
    <citation type="journal article" date="2005" name="Nat. Genet.">
        <title>Intragenic tandem repeats generate functional variability.</title>
        <authorList>
            <person name="Verstrepen K.J."/>
            <person name="Jansen A."/>
            <person name="Lewitter F."/>
            <person name="Fink G.R."/>
        </authorList>
    </citation>
    <scope>REPEATS</scope>
</reference>
<feature type="signal peptide" evidence="2">
    <location>
        <begin position="1"/>
        <end position="24"/>
    </location>
</feature>
<feature type="chain" id="PRO_0000014336" description="Flocculation protein FLO10">
    <location>
        <begin position="25"/>
        <end position="1146"/>
    </location>
</feature>
<feature type="propeptide" id="PRO_0000372449" description="Removed in mature form" evidence="2">
    <location>
        <begin position="1147"/>
        <end position="1169"/>
    </location>
</feature>
<feature type="domain" description="PA14" evidence="3">
    <location>
        <begin position="111"/>
        <end position="271"/>
    </location>
</feature>
<feature type="repeat" description="1-1" evidence="7">
    <location>
        <begin position="303"/>
        <end position="326"/>
    </location>
</feature>
<feature type="repeat" description="1-2" evidence="7">
    <location>
        <begin position="330"/>
        <end position="356"/>
    </location>
</feature>
<feature type="repeat" description="1-3" evidence="7">
    <location>
        <begin position="357"/>
        <end position="383"/>
    </location>
</feature>
<feature type="repeat" description="2-1" evidence="7">
    <location>
        <begin position="384"/>
        <end position="419"/>
    </location>
</feature>
<feature type="repeat" description="1-4" evidence="7">
    <location>
        <begin position="420"/>
        <end position="446"/>
    </location>
</feature>
<feature type="repeat" description="2-2" evidence="7">
    <location>
        <begin position="447"/>
        <end position="482"/>
    </location>
</feature>
<feature type="repeat" description="1-5" evidence="7">
    <location>
        <begin position="483"/>
        <end position="509"/>
    </location>
</feature>
<feature type="repeat" description="2-3" evidence="7">
    <location>
        <begin position="510"/>
        <end position="545"/>
    </location>
</feature>
<feature type="repeat" description="1-6" evidence="7">
    <location>
        <begin position="546"/>
        <end position="572"/>
    </location>
</feature>
<feature type="repeat" description="2-4" evidence="7">
    <location>
        <begin position="573"/>
        <end position="608"/>
    </location>
</feature>
<feature type="region of interest" description="6 X 27 AA approximate repeats, Ser/Thr-rich">
    <location>
        <begin position="303"/>
        <end position="572"/>
    </location>
</feature>
<feature type="region of interest" description="4 X 36 AA approximate repeats, Ser/Thr-rich">
    <location>
        <begin position="384"/>
        <end position="608"/>
    </location>
</feature>
<feature type="region of interest" description="Disordered" evidence="4">
    <location>
        <begin position="798"/>
        <end position="837"/>
    </location>
</feature>
<feature type="region of interest" description="Disordered" evidence="4">
    <location>
        <begin position="856"/>
        <end position="920"/>
    </location>
</feature>
<feature type="region of interest" description="Disordered" evidence="4">
    <location>
        <begin position="1070"/>
        <end position="1107"/>
    </location>
</feature>
<feature type="compositionally biased region" description="Low complexity" evidence="4">
    <location>
        <begin position="798"/>
        <end position="819"/>
    </location>
</feature>
<feature type="compositionally biased region" description="Polar residues" evidence="4">
    <location>
        <begin position="856"/>
        <end position="884"/>
    </location>
</feature>
<feature type="compositionally biased region" description="Low complexity" evidence="4">
    <location>
        <begin position="886"/>
        <end position="902"/>
    </location>
</feature>
<feature type="compositionally biased region" description="Polar residues" evidence="4">
    <location>
        <begin position="906"/>
        <end position="916"/>
    </location>
</feature>
<feature type="compositionally biased region" description="Low complexity" evidence="4">
    <location>
        <begin position="1077"/>
        <end position="1107"/>
    </location>
</feature>
<feature type="lipid moiety-binding region" description="GPI-anchor amidated glycine" evidence="2">
    <location>
        <position position="1146"/>
    </location>
</feature>
<feature type="glycosylation site" description="N-linked (GlcNAc...) asparagine" evidence="2">
    <location>
        <position position="122"/>
    </location>
</feature>
<feature type="glycosylation site" description="N-linked (GlcNAc...) asparagine" evidence="2">
    <location>
        <position position="157"/>
    </location>
</feature>
<feature type="glycosylation site" description="N-linked (GlcNAc...) asparagine" evidence="2">
    <location>
        <position position="279"/>
    </location>
</feature>
<feature type="glycosylation site" description="N-linked (GlcNAc...) asparagine" evidence="2">
    <location>
        <position position="389"/>
    </location>
</feature>
<feature type="glycosylation site" description="N-linked (GlcNAc...) asparagine" evidence="2">
    <location>
        <position position="452"/>
    </location>
</feature>
<feature type="glycosylation site" description="N-linked (GlcNAc...) asparagine" evidence="2">
    <location>
        <position position="515"/>
    </location>
</feature>
<feature type="glycosylation site" description="N-linked (GlcNAc...) asparagine" evidence="2">
    <location>
        <position position="578"/>
    </location>
</feature>
<feature type="glycosylation site" description="N-linked (GlcNAc...) asparagine" evidence="2">
    <location>
        <position position="656"/>
    </location>
</feature>
<feature type="glycosylation site" description="N-linked (GlcNAc...) asparagine" evidence="2">
    <location>
        <position position="686"/>
    </location>
</feature>
<feature type="glycosylation site" description="N-linked (GlcNAc...) asparagine" evidence="2">
    <location>
        <position position="879"/>
    </location>
</feature>
<feature type="glycosylation site" description="N-linked (GlcNAc...) asparagine" evidence="2">
    <location>
        <position position="1092"/>
    </location>
</feature>
<feature type="glycosylation site" description="N-linked (GlcNAc...) asparagine" evidence="2">
    <location>
        <position position="1099"/>
    </location>
</feature>
<dbReference type="EMBL" id="Z28327">
    <property type="protein sequence ID" value="CAA82182.1"/>
    <property type="molecule type" value="Genomic_DNA"/>
</dbReference>
<dbReference type="EMBL" id="BK006944">
    <property type="protein sequence ID" value="DAA09253.1"/>
    <property type="molecule type" value="Genomic_DNA"/>
</dbReference>
<dbReference type="PIR" id="S38181">
    <property type="entry name" value="S38181"/>
</dbReference>
<dbReference type="RefSeq" id="NP_013028.1">
    <property type="nucleotide sequence ID" value="NM_001179892.1"/>
</dbReference>
<dbReference type="SMR" id="P36170"/>
<dbReference type="BioGRID" id="34233">
    <property type="interactions" value="61"/>
</dbReference>
<dbReference type="FunCoup" id="P36170">
    <property type="interactions" value="52"/>
</dbReference>
<dbReference type="STRING" id="4932.YKR102W"/>
<dbReference type="GlyCosmos" id="P36170">
    <property type="glycosylation" value="12 sites, No reported glycans"/>
</dbReference>
<dbReference type="GlyGen" id="P36170">
    <property type="glycosylation" value="13 sites"/>
</dbReference>
<dbReference type="PaxDb" id="4932-YKR102W"/>
<dbReference type="EnsemblFungi" id="YKR102W_mRNA">
    <property type="protein sequence ID" value="YKR102W"/>
    <property type="gene ID" value="YKR102W"/>
</dbReference>
<dbReference type="GeneID" id="853977"/>
<dbReference type="KEGG" id="sce:YKR102W"/>
<dbReference type="AGR" id="SGD:S000001810"/>
<dbReference type="SGD" id="S000001810">
    <property type="gene designation" value="FLO10"/>
</dbReference>
<dbReference type="VEuPathDB" id="FungiDB:YKR102W"/>
<dbReference type="eggNOG" id="ENOG502QPQC">
    <property type="taxonomic scope" value="Eukaryota"/>
</dbReference>
<dbReference type="GeneTree" id="ENSGT00940000176342"/>
<dbReference type="HOGENOM" id="CLU_006076_0_0_1"/>
<dbReference type="InParanoid" id="P36170"/>
<dbReference type="OMA" id="CTETEST"/>
<dbReference type="OrthoDB" id="4070698at2759"/>
<dbReference type="BioCyc" id="YEAST:G3O-32064-MONOMER"/>
<dbReference type="BioGRID-ORCS" id="853977">
    <property type="hits" value="0 hits in 10 CRISPR screens"/>
</dbReference>
<dbReference type="PRO" id="PR:P36170"/>
<dbReference type="Proteomes" id="UP000002311">
    <property type="component" value="Chromosome XI"/>
</dbReference>
<dbReference type="RNAct" id="P36170">
    <property type="molecule type" value="protein"/>
</dbReference>
<dbReference type="GO" id="GO:0071944">
    <property type="term" value="C:cell periphery"/>
    <property type="evidence" value="ECO:0007005"/>
    <property type="project" value="SGD"/>
</dbReference>
<dbReference type="GO" id="GO:0005576">
    <property type="term" value="C:extracellular region"/>
    <property type="evidence" value="ECO:0007669"/>
    <property type="project" value="UniProtKB-KW"/>
</dbReference>
<dbReference type="GO" id="GO:0009277">
    <property type="term" value="C:fungal-type cell wall"/>
    <property type="evidence" value="ECO:0000250"/>
    <property type="project" value="SGD"/>
</dbReference>
<dbReference type="GO" id="GO:0098552">
    <property type="term" value="C:side of membrane"/>
    <property type="evidence" value="ECO:0007669"/>
    <property type="project" value="UniProtKB-KW"/>
</dbReference>
<dbReference type="GO" id="GO:0005537">
    <property type="term" value="F:D-mannose binding"/>
    <property type="evidence" value="ECO:0000250"/>
    <property type="project" value="SGD"/>
</dbReference>
<dbReference type="GO" id="GO:0044182">
    <property type="term" value="P:filamentous growth of a population of unicellular organisms"/>
    <property type="evidence" value="ECO:0000315"/>
    <property type="project" value="SGD"/>
</dbReference>
<dbReference type="GO" id="GO:0000128">
    <property type="term" value="P:flocculation"/>
    <property type="evidence" value="ECO:0000315"/>
    <property type="project" value="SGD"/>
</dbReference>
<dbReference type="GO" id="GO:0001403">
    <property type="term" value="P:invasive growth in response to glucose limitation"/>
    <property type="evidence" value="ECO:0000315"/>
    <property type="project" value="SGD"/>
</dbReference>
<dbReference type="FunFam" id="2.60.120.1560:FF:000002">
    <property type="entry name" value="Flocculation protein FLO10"/>
    <property type="match status" value="1"/>
</dbReference>
<dbReference type="Gene3D" id="2.60.120.1560">
    <property type="match status" value="2"/>
</dbReference>
<dbReference type="InterPro" id="IPR025928">
    <property type="entry name" value="Flocculin_t3_rpt"/>
</dbReference>
<dbReference type="InterPro" id="IPR037524">
    <property type="entry name" value="PA14/GLEYA"/>
</dbReference>
<dbReference type="InterPro" id="IPR011658">
    <property type="entry name" value="PA14_dom"/>
</dbReference>
<dbReference type="Pfam" id="PF13928">
    <property type="entry name" value="Flocculin_t3"/>
    <property type="match status" value="2"/>
</dbReference>
<dbReference type="Pfam" id="PF07691">
    <property type="entry name" value="PA14"/>
    <property type="match status" value="1"/>
</dbReference>
<dbReference type="SMART" id="SM00758">
    <property type="entry name" value="PA14"/>
    <property type="match status" value="1"/>
</dbReference>
<dbReference type="PROSITE" id="PS51820">
    <property type="entry name" value="PA14"/>
    <property type="match status" value="1"/>
</dbReference>
<organism>
    <name type="scientific">Saccharomyces cerevisiae (strain ATCC 204508 / S288c)</name>
    <name type="common">Baker's yeast</name>
    <dbReference type="NCBI Taxonomy" id="559292"/>
    <lineage>
        <taxon>Eukaryota</taxon>
        <taxon>Fungi</taxon>
        <taxon>Dikarya</taxon>
        <taxon>Ascomycota</taxon>
        <taxon>Saccharomycotina</taxon>
        <taxon>Saccharomycetes</taxon>
        <taxon>Saccharomycetales</taxon>
        <taxon>Saccharomycetaceae</taxon>
        <taxon>Saccharomyces</taxon>
    </lineage>
</organism>
<sequence>MPVAARYIFLTGLFLLSVANVALGTTEACLPAGEKKNGMTINFYQYSLKDSSTYSNPSYMAYGYADAEKLGSVSGQTKLSIDYSIPCNGASDTCACSDDDATEYSASQVVPVKRGVKLCSDNTTLSSKTEKRENDDCDQGAAYWSSDLFGFYTTPTNVTVEMTGYFLPPKTGTYTFGFATVDDSAILSVGGNVAFECCKQEQPPITSTDFTINGIKPWNADAPTDIKGSTYMYAGYYYPIKIVYSNAVSWGTLPVSVVLPDGTEVNDDFEGYVFSFDDNATQAHCSVPNPAEHARTCVSSATSSWSSSEVCTECTETESTSYVTPYVTSSSWSSSEVCTECTETESTSTSTPYVTSSSSSSSEVCTECTETESTSYVTPYVSSSTAAANYTSSFSSSSEVCTECTETESTSTSTPYVTSSSWSSSEVCTECTETESTSYVTPYVSSSTAAANYTSSFSSSSEVCTECTETESTSTSTPYVTSSSSSSSEVCTECTETESTSYVTPYVSSSTAAANYTSSFSSSSEVCTECTETESTSTSTPYVTSSSWSSSEVCTECTETESTSYVTPYVSSSTAAANYTSSFSSSSEVCTECTETESTSTSTPYATSSTGTATSFTASTSNTMTSLVQTDTTVSFSLSSTVSEHTNAPTSSVESNASTFISSNKGSVKSYVTSSIHSITPMYPSNQTVTSSSVVSTPITSESSESSASVTILPSTITSEFKPSTMKTKVVSISSSPTNLITSYDTTSKDSTVGSSTSSVSLISSISLPSSYSASSEQIFHSSIVSSNGQALTSFSSTKVSSSESSESHRTSPTTSSESGIKSSGVEIESTSTSSFSFHETSTASTSVQISSQFVTPSSPISTVAPRSTGLNSQTESTNSSKETMSSENSASVMPSSSATSPKTGKVTSDETSSGFSRDRTTVYRMTSETPSTNEQTTLITVSSCESNSCSNTVSSAVVSTATTTINGITTEYTTWCPLSATELTTVSKLESEEKTTLITVTSCESGVCSETASPAIVSTATATVNDVVTVYSTWSPQATNKLAVSSDIENSASKASFVSEAAETKSISRNNNFVPTSGTTSIETHTTTTSNASENSDNVSASEAVSSKSVTNPVLISVSQQPRGTPASSMIGSSTASLEMSSYLGIANHLLTNSGISIFIASLLLAIV</sequence>
<keyword id="KW-0134">Cell wall</keyword>
<keyword id="KW-0325">Glycoprotein</keyword>
<keyword id="KW-0336">GPI-anchor</keyword>
<keyword id="KW-0449">Lipoprotein</keyword>
<keyword id="KW-0472">Membrane</keyword>
<keyword id="KW-1185">Reference proteome</keyword>
<keyword id="KW-0677">Repeat</keyword>
<keyword id="KW-0964">Secreted</keyword>
<keyword id="KW-0732">Signal</keyword>
<protein>
    <recommendedName>
        <fullName>Flocculation protein FLO10</fullName>
        <shortName>Flocculin-10</shortName>
    </recommendedName>
</protein>
<proteinExistence type="inferred from homology"/>
<accession>P36170</accession>
<accession>D6VXG3</accession>
<evidence type="ECO:0000250" key="1"/>
<evidence type="ECO:0000255" key="2"/>
<evidence type="ECO:0000255" key="3">
    <source>
        <dbReference type="PROSITE-ProRule" id="PRU01164"/>
    </source>
</evidence>
<evidence type="ECO:0000256" key="4">
    <source>
        <dbReference type="SAM" id="MobiDB-lite"/>
    </source>
</evidence>
<evidence type="ECO:0000269" key="5">
    <source>
    </source>
</evidence>
<evidence type="ECO:0000269" key="6">
    <source>
    </source>
</evidence>
<evidence type="ECO:0000269" key="7">
    <source>
    </source>
</evidence>
<evidence type="ECO:0000305" key="8"/>
<gene>
    <name type="primary">FLO10</name>
    <name type="ordered locus">YKR102W</name>
</gene>
<name>FLO10_YEAST</name>